<reference key="1">
    <citation type="journal article" date="2009" name="Science">
        <title>The dynamics and time scale of ongoing genomic erosion in symbiotic bacteria.</title>
        <authorList>
            <person name="Moran N.A."/>
            <person name="McLaughlin H.J."/>
            <person name="Sorek R."/>
        </authorList>
    </citation>
    <scope>NUCLEOTIDE SEQUENCE [LARGE SCALE GENOMIC DNA]</scope>
    <source>
        <strain>Tuc7</strain>
    </source>
</reference>
<feature type="chain" id="PRO_1000198880" description="Arginine--tRNA ligase">
    <location>
        <begin position="1"/>
        <end position="574"/>
    </location>
</feature>
<feature type="short sequence motif" description="'HIGH' region">
    <location>
        <begin position="121"/>
        <end position="131"/>
    </location>
</feature>
<sequence length="574" mass="66685">MNLKNTIKKDIQDALIKIAIINCDPVITLNKKTKIGHYQLNNLIKIANISNLKPFELANRIILNIKKKYMYKEITFSQPGFINFLINPYWISEQLEKIFLSPRLGINHVNAQNIVIDYSSPNIAKEMHIGHLRSTIIGDVMARILDFLGHNVIRANHIGDWGTQFGMLIAYLEVKKLVNSPLSLMKLEEYYCKAKKKYDIDQLFAEKSREYVVKLQNGDQYCYSIWKKLVSITMLENCKIYKRLHVTLKKKHTMGESIYNKMLPNIIEDLKNKKIAIEKNGSTIVFLKEFKNRLGEPMGVVIQKKDKGFLYSTTDIACLKYRYQVLHADRIIYYTDSRQHQHLLQAWTIAKKALYISQNLLLEHHIFGMMLSKDKRPFKTRDGDTIKLSALLDEATERAMRLIKNKQPNLSKKKLNQLSNIIGVGAVKYADLSKNRNTNYIFDWNEMLSFEGNTAPYIQYAYTRIVSILKKSNMPIKKLKEKIFLTKESEINLAIKILEFEEIILLISQKGTPHILCKYLYHLATSFSHFYENCSILFPKKIKTCKSRLKLSILTAKTLKKGLNMLGIRVVKKM</sequence>
<name>SYR_BUCAT</name>
<protein>
    <recommendedName>
        <fullName evidence="1">Arginine--tRNA ligase</fullName>
        <ecNumber evidence="1">6.1.1.19</ecNumber>
    </recommendedName>
    <alternativeName>
        <fullName evidence="1">Arginyl-tRNA synthetase</fullName>
        <shortName evidence="1">ArgRS</shortName>
    </alternativeName>
</protein>
<keyword id="KW-0030">Aminoacyl-tRNA synthetase</keyword>
<keyword id="KW-0067">ATP-binding</keyword>
<keyword id="KW-0963">Cytoplasm</keyword>
<keyword id="KW-0436">Ligase</keyword>
<keyword id="KW-0547">Nucleotide-binding</keyword>
<keyword id="KW-0648">Protein biosynthesis</keyword>
<evidence type="ECO:0000255" key="1">
    <source>
        <dbReference type="HAMAP-Rule" id="MF_00123"/>
    </source>
</evidence>
<dbReference type="EC" id="6.1.1.19" evidence="1"/>
<dbReference type="EMBL" id="CP001158">
    <property type="protein sequence ID" value="ACL30059.1"/>
    <property type="molecule type" value="Genomic_DNA"/>
</dbReference>
<dbReference type="RefSeq" id="WP_012619482.1">
    <property type="nucleotide sequence ID" value="NC_011834.1"/>
</dbReference>
<dbReference type="SMR" id="B8D7E4"/>
<dbReference type="KEGG" id="bau:BUAPTUC7_240"/>
<dbReference type="HOGENOM" id="CLU_006406_5_1_6"/>
<dbReference type="GO" id="GO:0005737">
    <property type="term" value="C:cytoplasm"/>
    <property type="evidence" value="ECO:0007669"/>
    <property type="project" value="UniProtKB-SubCell"/>
</dbReference>
<dbReference type="GO" id="GO:0004814">
    <property type="term" value="F:arginine-tRNA ligase activity"/>
    <property type="evidence" value="ECO:0007669"/>
    <property type="project" value="UniProtKB-UniRule"/>
</dbReference>
<dbReference type="GO" id="GO:0005524">
    <property type="term" value="F:ATP binding"/>
    <property type="evidence" value="ECO:0007669"/>
    <property type="project" value="UniProtKB-UniRule"/>
</dbReference>
<dbReference type="GO" id="GO:0006420">
    <property type="term" value="P:arginyl-tRNA aminoacylation"/>
    <property type="evidence" value="ECO:0007669"/>
    <property type="project" value="UniProtKB-UniRule"/>
</dbReference>
<dbReference type="CDD" id="cd07956">
    <property type="entry name" value="Anticodon_Ia_Arg"/>
    <property type="match status" value="1"/>
</dbReference>
<dbReference type="CDD" id="cd00671">
    <property type="entry name" value="ArgRS_core"/>
    <property type="match status" value="1"/>
</dbReference>
<dbReference type="FunFam" id="3.40.50.620:FF:000030">
    <property type="entry name" value="Arginine--tRNA ligase"/>
    <property type="match status" value="1"/>
</dbReference>
<dbReference type="FunFam" id="1.10.730.10:FF:000006">
    <property type="entry name" value="Arginyl-tRNA synthetase 2, mitochondrial"/>
    <property type="match status" value="1"/>
</dbReference>
<dbReference type="Gene3D" id="3.30.1360.70">
    <property type="entry name" value="Arginyl tRNA synthetase N-terminal domain"/>
    <property type="match status" value="1"/>
</dbReference>
<dbReference type="Gene3D" id="3.40.50.620">
    <property type="entry name" value="HUPs"/>
    <property type="match status" value="1"/>
</dbReference>
<dbReference type="Gene3D" id="1.10.730.10">
    <property type="entry name" value="Isoleucyl-tRNA Synthetase, Domain 1"/>
    <property type="match status" value="1"/>
</dbReference>
<dbReference type="HAMAP" id="MF_00123">
    <property type="entry name" value="Arg_tRNA_synth"/>
    <property type="match status" value="1"/>
</dbReference>
<dbReference type="InterPro" id="IPR001412">
    <property type="entry name" value="aa-tRNA-synth_I_CS"/>
</dbReference>
<dbReference type="InterPro" id="IPR001278">
    <property type="entry name" value="Arg-tRNA-ligase"/>
</dbReference>
<dbReference type="InterPro" id="IPR005148">
    <property type="entry name" value="Arg-tRNA-synth_N"/>
</dbReference>
<dbReference type="InterPro" id="IPR036695">
    <property type="entry name" value="Arg-tRNA-synth_N_sf"/>
</dbReference>
<dbReference type="InterPro" id="IPR035684">
    <property type="entry name" value="ArgRS_core"/>
</dbReference>
<dbReference type="InterPro" id="IPR008909">
    <property type="entry name" value="DALR_anticod-bd"/>
</dbReference>
<dbReference type="InterPro" id="IPR014729">
    <property type="entry name" value="Rossmann-like_a/b/a_fold"/>
</dbReference>
<dbReference type="InterPro" id="IPR009080">
    <property type="entry name" value="tRNAsynth_Ia_anticodon-bd"/>
</dbReference>
<dbReference type="NCBIfam" id="TIGR00456">
    <property type="entry name" value="argS"/>
    <property type="match status" value="1"/>
</dbReference>
<dbReference type="PANTHER" id="PTHR11956:SF5">
    <property type="entry name" value="ARGININE--TRNA LIGASE, CYTOPLASMIC"/>
    <property type="match status" value="1"/>
</dbReference>
<dbReference type="PANTHER" id="PTHR11956">
    <property type="entry name" value="ARGINYL-TRNA SYNTHETASE"/>
    <property type="match status" value="1"/>
</dbReference>
<dbReference type="Pfam" id="PF03485">
    <property type="entry name" value="Arg_tRNA_synt_N"/>
    <property type="match status" value="1"/>
</dbReference>
<dbReference type="Pfam" id="PF05746">
    <property type="entry name" value="DALR_1"/>
    <property type="match status" value="1"/>
</dbReference>
<dbReference type="Pfam" id="PF00750">
    <property type="entry name" value="tRNA-synt_1d"/>
    <property type="match status" value="1"/>
</dbReference>
<dbReference type="PRINTS" id="PR01038">
    <property type="entry name" value="TRNASYNTHARG"/>
</dbReference>
<dbReference type="SMART" id="SM01016">
    <property type="entry name" value="Arg_tRNA_synt_N"/>
    <property type="match status" value="1"/>
</dbReference>
<dbReference type="SMART" id="SM00836">
    <property type="entry name" value="DALR_1"/>
    <property type="match status" value="1"/>
</dbReference>
<dbReference type="SUPFAM" id="SSF47323">
    <property type="entry name" value="Anticodon-binding domain of a subclass of class I aminoacyl-tRNA synthetases"/>
    <property type="match status" value="1"/>
</dbReference>
<dbReference type="SUPFAM" id="SSF55190">
    <property type="entry name" value="Arginyl-tRNA synthetase (ArgRS), N-terminal 'additional' domain"/>
    <property type="match status" value="1"/>
</dbReference>
<dbReference type="SUPFAM" id="SSF52374">
    <property type="entry name" value="Nucleotidylyl transferase"/>
    <property type="match status" value="1"/>
</dbReference>
<dbReference type="PROSITE" id="PS00178">
    <property type="entry name" value="AA_TRNA_LIGASE_I"/>
    <property type="match status" value="1"/>
</dbReference>
<accession>B8D7E4</accession>
<comment type="catalytic activity">
    <reaction evidence="1">
        <text>tRNA(Arg) + L-arginine + ATP = L-arginyl-tRNA(Arg) + AMP + diphosphate</text>
        <dbReference type="Rhea" id="RHEA:20301"/>
        <dbReference type="Rhea" id="RHEA-COMP:9658"/>
        <dbReference type="Rhea" id="RHEA-COMP:9673"/>
        <dbReference type="ChEBI" id="CHEBI:30616"/>
        <dbReference type="ChEBI" id="CHEBI:32682"/>
        <dbReference type="ChEBI" id="CHEBI:33019"/>
        <dbReference type="ChEBI" id="CHEBI:78442"/>
        <dbReference type="ChEBI" id="CHEBI:78513"/>
        <dbReference type="ChEBI" id="CHEBI:456215"/>
        <dbReference type="EC" id="6.1.1.19"/>
    </reaction>
</comment>
<comment type="subunit">
    <text evidence="1">Monomer.</text>
</comment>
<comment type="subcellular location">
    <subcellularLocation>
        <location evidence="1">Cytoplasm</location>
    </subcellularLocation>
</comment>
<comment type="similarity">
    <text evidence="1">Belongs to the class-I aminoacyl-tRNA synthetase family.</text>
</comment>
<gene>
    <name evidence="1" type="primary">argS</name>
    <name type="ordered locus">BUAPTUC7_240</name>
</gene>
<proteinExistence type="inferred from homology"/>
<organism>
    <name type="scientific">Buchnera aphidicola subsp. Acyrthosiphon pisum (strain Tuc7)</name>
    <dbReference type="NCBI Taxonomy" id="561501"/>
    <lineage>
        <taxon>Bacteria</taxon>
        <taxon>Pseudomonadati</taxon>
        <taxon>Pseudomonadota</taxon>
        <taxon>Gammaproteobacteria</taxon>
        <taxon>Enterobacterales</taxon>
        <taxon>Erwiniaceae</taxon>
        <taxon>Buchnera</taxon>
    </lineage>
</organism>